<organism>
    <name type="scientific">Ruminiclostridium cellulolyticum (strain ATCC 35319 / DSM 5812 / JCM 6584 / H10)</name>
    <name type="common">Clostridium cellulolyticum</name>
    <dbReference type="NCBI Taxonomy" id="394503"/>
    <lineage>
        <taxon>Bacteria</taxon>
        <taxon>Bacillati</taxon>
        <taxon>Bacillota</taxon>
        <taxon>Clostridia</taxon>
        <taxon>Eubacteriales</taxon>
        <taxon>Oscillospiraceae</taxon>
        <taxon>Ruminiclostridium</taxon>
    </lineage>
</organism>
<name>ACCD_RUMCH</name>
<accession>B8I941</accession>
<dbReference type="EC" id="2.1.3.15" evidence="1"/>
<dbReference type="EMBL" id="CP001348">
    <property type="protein sequence ID" value="ACL75301.1"/>
    <property type="molecule type" value="Genomic_DNA"/>
</dbReference>
<dbReference type="RefSeq" id="WP_015924458.1">
    <property type="nucleotide sequence ID" value="NC_011898.1"/>
</dbReference>
<dbReference type="SMR" id="B8I941"/>
<dbReference type="STRING" id="394503.Ccel_0935"/>
<dbReference type="KEGG" id="cce:Ccel_0935"/>
<dbReference type="eggNOG" id="COG0777">
    <property type="taxonomic scope" value="Bacteria"/>
</dbReference>
<dbReference type="HOGENOM" id="CLU_015486_1_0_9"/>
<dbReference type="OrthoDB" id="9772975at2"/>
<dbReference type="UniPathway" id="UPA00655">
    <property type="reaction ID" value="UER00711"/>
</dbReference>
<dbReference type="Proteomes" id="UP000001349">
    <property type="component" value="Chromosome"/>
</dbReference>
<dbReference type="GO" id="GO:0009317">
    <property type="term" value="C:acetyl-CoA carboxylase complex"/>
    <property type="evidence" value="ECO:0007669"/>
    <property type="project" value="InterPro"/>
</dbReference>
<dbReference type="GO" id="GO:0003989">
    <property type="term" value="F:acetyl-CoA carboxylase activity"/>
    <property type="evidence" value="ECO:0007669"/>
    <property type="project" value="InterPro"/>
</dbReference>
<dbReference type="GO" id="GO:0005524">
    <property type="term" value="F:ATP binding"/>
    <property type="evidence" value="ECO:0007669"/>
    <property type="project" value="UniProtKB-KW"/>
</dbReference>
<dbReference type="GO" id="GO:0016743">
    <property type="term" value="F:carboxyl- or carbamoyltransferase activity"/>
    <property type="evidence" value="ECO:0007669"/>
    <property type="project" value="UniProtKB-UniRule"/>
</dbReference>
<dbReference type="GO" id="GO:0008270">
    <property type="term" value="F:zinc ion binding"/>
    <property type="evidence" value="ECO:0007669"/>
    <property type="project" value="UniProtKB-UniRule"/>
</dbReference>
<dbReference type="GO" id="GO:0006633">
    <property type="term" value="P:fatty acid biosynthetic process"/>
    <property type="evidence" value="ECO:0007669"/>
    <property type="project" value="UniProtKB-KW"/>
</dbReference>
<dbReference type="GO" id="GO:2001295">
    <property type="term" value="P:malonyl-CoA biosynthetic process"/>
    <property type="evidence" value="ECO:0007669"/>
    <property type="project" value="UniProtKB-UniRule"/>
</dbReference>
<dbReference type="Gene3D" id="3.90.226.10">
    <property type="entry name" value="2-enoyl-CoA Hydratase, Chain A, domain 1"/>
    <property type="match status" value="1"/>
</dbReference>
<dbReference type="HAMAP" id="MF_01395">
    <property type="entry name" value="AcetylCoA_CT_beta"/>
    <property type="match status" value="1"/>
</dbReference>
<dbReference type="InterPro" id="IPR034733">
    <property type="entry name" value="AcCoA_carboxyl_beta"/>
</dbReference>
<dbReference type="InterPro" id="IPR000438">
    <property type="entry name" value="Acetyl_CoA_COase_Trfase_b_su"/>
</dbReference>
<dbReference type="InterPro" id="IPR029045">
    <property type="entry name" value="ClpP/crotonase-like_dom_sf"/>
</dbReference>
<dbReference type="InterPro" id="IPR011762">
    <property type="entry name" value="COA_CT_N"/>
</dbReference>
<dbReference type="InterPro" id="IPR041010">
    <property type="entry name" value="Znf-ACC"/>
</dbReference>
<dbReference type="NCBIfam" id="TIGR00515">
    <property type="entry name" value="accD"/>
    <property type="match status" value="1"/>
</dbReference>
<dbReference type="PANTHER" id="PTHR42995">
    <property type="entry name" value="ACETYL-COENZYME A CARBOXYLASE CARBOXYL TRANSFERASE SUBUNIT BETA, CHLOROPLASTIC"/>
    <property type="match status" value="1"/>
</dbReference>
<dbReference type="PANTHER" id="PTHR42995:SF5">
    <property type="entry name" value="ACETYL-COENZYME A CARBOXYLASE CARBOXYL TRANSFERASE SUBUNIT BETA, CHLOROPLASTIC"/>
    <property type="match status" value="1"/>
</dbReference>
<dbReference type="Pfam" id="PF01039">
    <property type="entry name" value="Carboxyl_trans"/>
    <property type="match status" value="1"/>
</dbReference>
<dbReference type="Pfam" id="PF17848">
    <property type="entry name" value="Zn_ribbon_ACC"/>
    <property type="match status" value="1"/>
</dbReference>
<dbReference type="PRINTS" id="PR01070">
    <property type="entry name" value="ACCCTRFRASEB"/>
</dbReference>
<dbReference type="SUPFAM" id="SSF52096">
    <property type="entry name" value="ClpP/crotonase"/>
    <property type="match status" value="1"/>
</dbReference>
<dbReference type="PROSITE" id="PS50980">
    <property type="entry name" value="COA_CT_NTER"/>
    <property type="match status" value="1"/>
</dbReference>
<sequence length="288" mass="32025">MLKKISFKKLELKPELENKNESTIIPCAPKELLLICPKCKKTLLKSELADNLDVCRECGYHFRISARKRIGITVDNETFVEYDRELRSKNILNFPGYDEKLKTAIKENGENEAVICGIGKIEGFECAIFAMEPFFMMGSMGCVVGEKIARLFELATDKSIPVIGFTVSGGARMQEGIMSLMQMAKISGAVKRHSNNGNLYVAVLTDPTTGGVTASFAMQGDIIVSEPDTLIGFAGPRVIEQTIRRSLPDGFQRAEFLMERGFLDSIVGRNELKKYLGNILMLHNVEAR</sequence>
<proteinExistence type="inferred from homology"/>
<comment type="function">
    <text evidence="1">Component of the acetyl coenzyme A carboxylase (ACC) complex. Biotin carboxylase (BC) catalyzes the carboxylation of biotin on its carrier protein (BCCP) and then the CO(2) group is transferred by the transcarboxylase to acetyl-CoA to form malonyl-CoA.</text>
</comment>
<comment type="catalytic activity">
    <reaction evidence="1">
        <text>N(6)-carboxybiotinyl-L-lysyl-[protein] + acetyl-CoA = N(6)-biotinyl-L-lysyl-[protein] + malonyl-CoA</text>
        <dbReference type="Rhea" id="RHEA:54728"/>
        <dbReference type="Rhea" id="RHEA-COMP:10505"/>
        <dbReference type="Rhea" id="RHEA-COMP:10506"/>
        <dbReference type="ChEBI" id="CHEBI:57288"/>
        <dbReference type="ChEBI" id="CHEBI:57384"/>
        <dbReference type="ChEBI" id="CHEBI:83144"/>
        <dbReference type="ChEBI" id="CHEBI:83145"/>
        <dbReference type="EC" id="2.1.3.15"/>
    </reaction>
</comment>
<comment type="cofactor">
    <cofactor evidence="1">
        <name>Zn(2+)</name>
        <dbReference type="ChEBI" id="CHEBI:29105"/>
    </cofactor>
    <text evidence="1">Binds 1 zinc ion per subunit.</text>
</comment>
<comment type="pathway">
    <text evidence="1">Lipid metabolism; malonyl-CoA biosynthesis; malonyl-CoA from acetyl-CoA: step 1/1.</text>
</comment>
<comment type="subunit">
    <text evidence="1">Acetyl-CoA carboxylase is a heterohexamer composed of biotin carboxyl carrier protein (AccB), biotin carboxylase (AccC) and two subunits each of ACCase subunit alpha (AccA) and ACCase subunit beta (AccD).</text>
</comment>
<comment type="subcellular location">
    <subcellularLocation>
        <location evidence="1">Cytoplasm</location>
    </subcellularLocation>
</comment>
<comment type="similarity">
    <text evidence="1">Belongs to the AccD/PCCB family.</text>
</comment>
<protein>
    <recommendedName>
        <fullName evidence="1">Acetyl-coenzyme A carboxylase carboxyl transferase subunit beta</fullName>
        <shortName evidence="1">ACCase subunit beta</shortName>
        <shortName evidence="1">Acetyl-CoA carboxylase carboxyltransferase subunit beta</shortName>
        <ecNumber evidence="1">2.1.3.15</ecNumber>
    </recommendedName>
</protein>
<keyword id="KW-0067">ATP-binding</keyword>
<keyword id="KW-0963">Cytoplasm</keyword>
<keyword id="KW-0275">Fatty acid biosynthesis</keyword>
<keyword id="KW-0276">Fatty acid metabolism</keyword>
<keyword id="KW-0444">Lipid biosynthesis</keyword>
<keyword id="KW-0443">Lipid metabolism</keyword>
<keyword id="KW-0479">Metal-binding</keyword>
<keyword id="KW-0547">Nucleotide-binding</keyword>
<keyword id="KW-1185">Reference proteome</keyword>
<keyword id="KW-0808">Transferase</keyword>
<keyword id="KW-0862">Zinc</keyword>
<keyword id="KW-0863">Zinc-finger</keyword>
<feature type="chain" id="PRO_0000389727" description="Acetyl-coenzyme A carboxylase carboxyl transferase subunit beta">
    <location>
        <begin position="1"/>
        <end position="288"/>
    </location>
</feature>
<feature type="domain" description="CoA carboxyltransferase N-terminal" evidence="2">
    <location>
        <begin position="32"/>
        <end position="288"/>
    </location>
</feature>
<feature type="zinc finger region" description="C4-type" evidence="1">
    <location>
        <begin position="36"/>
        <end position="58"/>
    </location>
</feature>
<feature type="binding site" evidence="1">
    <location>
        <position position="36"/>
    </location>
    <ligand>
        <name>Zn(2+)</name>
        <dbReference type="ChEBI" id="CHEBI:29105"/>
    </ligand>
</feature>
<feature type="binding site" evidence="1">
    <location>
        <position position="39"/>
    </location>
    <ligand>
        <name>Zn(2+)</name>
        <dbReference type="ChEBI" id="CHEBI:29105"/>
    </ligand>
</feature>
<feature type="binding site" evidence="1">
    <location>
        <position position="55"/>
    </location>
    <ligand>
        <name>Zn(2+)</name>
        <dbReference type="ChEBI" id="CHEBI:29105"/>
    </ligand>
</feature>
<feature type="binding site" evidence="1">
    <location>
        <position position="58"/>
    </location>
    <ligand>
        <name>Zn(2+)</name>
        <dbReference type="ChEBI" id="CHEBI:29105"/>
    </ligand>
</feature>
<evidence type="ECO:0000255" key="1">
    <source>
        <dbReference type="HAMAP-Rule" id="MF_01395"/>
    </source>
</evidence>
<evidence type="ECO:0000255" key="2">
    <source>
        <dbReference type="PROSITE-ProRule" id="PRU01136"/>
    </source>
</evidence>
<gene>
    <name evidence="1" type="primary">accD</name>
    <name type="ordered locus">Ccel_0935</name>
</gene>
<reference key="1">
    <citation type="submission" date="2009-01" db="EMBL/GenBank/DDBJ databases">
        <title>Complete sequence of Clostridium cellulolyticum H10.</title>
        <authorList>
            <consortium name="US DOE Joint Genome Institute"/>
            <person name="Lucas S."/>
            <person name="Copeland A."/>
            <person name="Lapidus A."/>
            <person name="Glavina del Rio T."/>
            <person name="Dalin E."/>
            <person name="Tice H."/>
            <person name="Bruce D."/>
            <person name="Goodwin L."/>
            <person name="Pitluck S."/>
            <person name="Chertkov O."/>
            <person name="Saunders E."/>
            <person name="Brettin T."/>
            <person name="Detter J.C."/>
            <person name="Han C."/>
            <person name="Larimer F."/>
            <person name="Land M."/>
            <person name="Hauser L."/>
            <person name="Kyrpides N."/>
            <person name="Ivanova N."/>
            <person name="Zhou J."/>
            <person name="Richardson P."/>
        </authorList>
    </citation>
    <scope>NUCLEOTIDE SEQUENCE [LARGE SCALE GENOMIC DNA]</scope>
    <source>
        <strain>ATCC 35319 / DSM 5812 / JCM 6584 / H10</strain>
    </source>
</reference>